<evidence type="ECO:0000250" key="1">
    <source>
        <dbReference type="UniProtKB" id="O00628"/>
    </source>
</evidence>
<evidence type="ECO:0000305" key="2"/>
<name>PEX7_DICDI</name>
<accession>Q54WA3</accession>
<keyword id="KW-0963">Cytoplasm</keyword>
<keyword id="KW-0576">Peroxisome</keyword>
<keyword id="KW-0653">Protein transport</keyword>
<keyword id="KW-1185">Reference proteome</keyword>
<keyword id="KW-0677">Repeat</keyword>
<keyword id="KW-0813">Transport</keyword>
<keyword id="KW-0853">WD repeat</keyword>
<organism>
    <name type="scientific">Dictyostelium discoideum</name>
    <name type="common">Social amoeba</name>
    <dbReference type="NCBI Taxonomy" id="44689"/>
    <lineage>
        <taxon>Eukaryota</taxon>
        <taxon>Amoebozoa</taxon>
        <taxon>Evosea</taxon>
        <taxon>Eumycetozoa</taxon>
        <taxon>Dictyostelia</taxon>
        <taxon>Dictyosteliales</taxon>
        <taxon>Dictyosteliaceae</taxon>
        <taxon>Dictyostelium</taxon>
    </lineage>
</organism>
<reference key="1">
    <citation type="journal article" date="2005" name="Nature">
        <title>The genome of the social amoeba Dictyostelium discoideum.</title>
        <authorList>
            <person name="Eichinger L."/>
            <person name="Pachebat J.A."/>
            <person name="Gloeckner G."/>
            <person name="Rajandream M.A."/>
            <person name="Sucgang R."/>
            <person name="Berriman M."/>
            <person name="Song J."/>
            <person name="Olsen R."/>
            <person name="Szafranski K."/>
            <person name="Xu Q."/>
            <person name="Tunggal B."/>
            <person name="Kummerfeld S."/>
            <person name="Madera M."/>
            <person name="Konfortov B.A."/>
            <person name="Rivero F."/>
            <person name="Bankier A.T."/>
            <person name="Lehmann R."/>
            <person name="Hamlin N."/>
            <person name="Davies R."/>
            <person name="Gaudet P."/>
            <person name="Fey P."/>
            <person name="Pilcher K."/>
            <person name="Chen G."/>
            <person name="Saunders D."/>
            <person name="Sodergren E.J."/>
            <person name="Davis P."/>
            <person name="Kerhornou A."/>
            <person name="Nie X."/>
            <person name="Hall N."/>
            <person name="Anjard C."/>
            <person name="Hemphill L."/>
            <person name="Bason N."/>
            <person name="Farbrother P."/>
            <person name="Desany B."/>
            <person name="Just E."/>
            <person name="Morio T."/>
            <person name="Rost R."/>
            <person name="Churcher C.M."/>
            <person name="Cooper J."/>
            <person name="Haydock S."/>
            <person name="van Driessche N."/>
            <person name="Cronin A."/>
            <person name="Goodhead I."/>
            <person name="Muzny D.M."/>
            <person name="Mourier T."/>
            <person name="Pain A."/>
            <person name="Lu M."/>
            <person name="Harper D."/>
            <person name="Lindsay R."/>
            <person name="Hauser H."/>
            <person name="James K.D."/>
            <person name="Quiles M."/>
            <person name="Madan Babu M."/>
            <person name="Saito T."/>
            <person name="Buchrieser C."/>
            <person name="Wardroper A."/>
            <person name="Felder M."/>
            <person name="Thangavelu M."/>
            <person name="Johnson D."/>
            <person name="Knights A."/>
            <person name="Loulseged H."/>
            <person name="Mungall K.L."/>
            <person name="Oliver K."/>
            <person name="Price C."/>
            <person name="Quail M.A."/>
            <person name="Urushihara H."/>
            <person name="Hernandez J."/>
            <person name="Rabbinowitsch E."/>
            <person name="Steffen D."/>
            <person name="Sanders M."/>
            <person name="Ma J."/>
            <person name="Kohara Y."/>
            <person name="Sharp S."/>
            <person name="Simmonds M.N."/>
            <person name="Spiegler S."/>
            <person name="Tivey A."/>
            <person name="Sugano S."/>
            <person name="White B."/>
            <person name="Walker D."/>
            <person name="Woodward J.R."/>
            <person name="Winckler T."/>
            <person name="Tanaka Y."/>
            <person name="Shaulsky G."/>
            <person name="Schleicher M."/>
            <person name="Weinstock G.M."/>
            <person name="Rosenthal A."/>
            <person name="Cox E.C."/>
            <person name="Chisholm R.L."/>
            <person name="Gibbs R.A."/>
            <person name="Loomis W.F."/>
            <person name="Platzer M."/>
            <person name="Kay R.R."/>
            <person name="Williams J.G."/>
            <person name="Dear P.H."/>
            <person name="Noegel A.A."/>
            <person name="Barrell B.G."/>
            <person name="Kuspa A."/>
        </authorList>
    </citation>
    <scope>NUCLEOTIDE SEQUENCE [LARGE SCALE GENOMIC DNA]</scope>
    <source>
        <strain>AX4</strain>
    </source>
</reference>
<proteinExistence type="inferred from homology"/>
<feature type="chain" id="PRO_0000371406" description="Peroxisomal targeting signal 2 receptor">
    <location>
        <begin position="1"/>
        <end position="316"/>
    </location>
</feature>
<feature type="repeat" description="WD 1">
    <location>
        <begin position="56"/>
        <end position="96"/>
    </location>
</feature>
<feature type="repeat" description="WD 2">
    <location>
        <begin position="102"/>
        <end position="142"/>
    </location>
</feature>
<feature type="repeat" description="WD 3">
    <location>
        <begin position="145"/>
        <end position="185"/>
    </location>
</feature>
<feature type="repeat" description="WD 4">
    <location>
        <begin position="188"/>
        <end position="228"/>
    </location>
</feature>
<feature type="repeat" description="WD 5">
    <location>
        <begin position="232"/>
        <end position="272"/>
    </location>
</feature>
<feature type="repeat" description="WD 6">
    <location>
        <begin position="277"/>
        <end position="316"/>
    </location>
</feature>
<gene>
    <name type="primary">pex7</name>
    <name type="ORF">DDB_G0279801</name>
</gene>
<protein>
    <recommendedName>
        <fullName>Peroxisomal targeting signal 2 receptor</fullName>
        <shortName>PTS2 receptor</shortName>
    </recommendedName>
    <alternativeName>
        <fullName>Peroxin-7</fullName>
    </alternativeName>
</protein>
<sequence>MKRFHSHFNGYSVEFSPFEEQRLACVTSQHFGIIGNGRQYILDVLDRDIGAFKTFDTRDGLYDCTWSEENECHVASSSGDGSIKIWDTQAPSGGRPIKSFEEHTKEVYSVDWNLVTKDTFITGSWDQSIKIWNPRMDRSLKTFREHRYCIYSAIWSPRNAHLFASVSGDRTLKIWDSRDNRSLNTIKAHDHEILTCDWNKYNDKEVVTGSVDKTIRIWDIRYPDRPTTILRGHTYAVRRIKCSPHSESMLASCSYDMSVIVWDRAREQDPIIARMDHHTEFVVGLDWNMFIDGQMASCSWDEQVCVWNLGRPGQFR</sequence>
<comment type="function">
    <text evidence="1">Receptor required for the peroxisomal import of proteins containing a C-terminal PTS2-type peroxisomal targeting signal. Specifically binds to cargo proteins containing a PTS2 peroxisomal targeting signal in the cytosol. Cargo protein-binding triggers interaction with PEX5 and formation of a ternary complex composed of PEX5 and PEX7 along with PTS2-containing cargo proteins, which is tranlocated into peroxisomes by passing through the PEX13-PEX14 docking complex.</text>
</comment>
<comment type="subunit">
    <text evidence="1">Interacts with PEX5; interaction only takes place when PEX7 is associated with cargo proteins.</text>
</comment>
<comment type="subcellular location">
    <subcellularLocation>
        <location evidence="1">Cytoplasm</location>
        <location evidence="1">Cytosol</location>
    </subcellularLocation>
    <subcellularLocation>
        <location evidence="1">Peroxisome matrix</location>
    </subcellularLocation>
    <text evidence="1">Translocated into the peroxisome matrix together with PTS2-containing cargo proteins and PEX5.</text>
</comment>
<comment type="similarity">
    <text evidence="2">Belongs to the WD repeat peroxin-7 family.</text>
</comment>
<dbReference type="EMBL" id="AAFI02000033">
    <property type="protein sequence ID" value="EAL67514.1"/>
    <property type="molecule type" value="Genomic_DNA"/>
</dbReference>
<dbReference type="RefSeq" id="XP_641489.1">
    <property type="nucleotide sequence ID" value="XM_636397.1"/>
</dbReference>
<dbReference type="SMR" id="Q54WA3"/>
<dbReference type="FunCoup" id="Q54WA3">
    <property type="interactions" value="95"/>
</dbReference>
<dbReference type="STRING" id="44689.Q54WA3"/>
<dbReference type="PaxDb" id="44689-DDB0233068"/>
<dbReference type="EnsemblProtists" id="EAL67514">
    <property type="protein sequence ID" value="EAL67514"/>
    <property type="gene ID" value="DDB_G0279801"/>
</dbReference>
<dbReference type="GeneID" id="8622229"/>
<dbReference type="KEGG" id="ddi:DDB_G0279801"/>
<dbReference type="dictyBase" id="DDB_G0279801">
    <property type="gene designation" value="pex7"/>
</dbReference>
<dbReference type="VEuPathDB" id="AmoebaDB:DDB_G0279801"/>
<dbReference type="eggNOG" id="KOG0277">
    <property type="taxonomic scope" value="Eukaryota"/>
</dbReference>
<dbReference type="HOGENOM" id="CLU_046581_1_0_1"/>
<dbReference type="InParanoid" id="Q54WA3"/>
<dbReference type="OMA" id="FAVHWNL"/>
<dbReference type="PhylomeDB" id="Q54WA3"/>
<dbReference type="Reactome" id="R-DDI-9033241">
    <property type="pathway name" value="Peroxisomal protein import"/>
</dbReference>
<dbReference type="PRO" id="PR:Q54WA3"/>
<dbReference type="Proteomes" id="UP000002195">
    <property type="component" value="Chromosome 3"/>
</dbReference>
<dbReference type="GO" id="GO:0005829">
    <property type="term" value="C:cytosol"/>
    <property type="evidence" value="ECO:0000318"/>
    <property type="project" value="GO_Central"/>
</dbReference>
<dbReference type="GO" id="GO:0005782">
    <property type="term" value="C:peroxisomal matrix"/>
    <property type="evidence" value="ECO:0000318"/>
    <property type="project" value="GO_Central"/>
</dbReference>
<dbReference type="GO" id="GO:0005777">
    <property type="term" value="C:peroxisome"/>
    <property type="evidence" value="ECO:0000250"/>
    <property type="project" value="dictyBase"/>
</dbReference>
<dbReference type="GO" id="GO:0005053">
    <property type="term" value="F:peroxisome matrix targeting signal-2 binding"/>
    <property type="evidence" value="ECO:0000250"/>
    <property type="project" value="dictyBase"/>
</dbReference>
<dbReference type="GO" id="GO:0007031">
    <property type="term" value="P:peroxisome organization"/>
    <property type="evidence" value="ECO:0000250"/>
    <property type="project" value="dictyBase"/>
</dbReference>
<dbReference type="GO" id="GO:0016558">
    <property type="term" value="P:protein import into peroxisome matrix"/>
    <property type="evidence" value="ECO:0000318"/>
    <property type="project" value="GO_Central"/>
</dbReference>
<dbReference type="CDD" id="cd00200">
    <property type="entry name" value="WD40"/>
    <property type="match status" value="1"/>
</dbReference>
<dbReference type="FunFam" id="2.130.10.10:FF:000850">
    <property type="entry name" value="WD40 repeat-containing protein"/>
    <property type="match status" value="1"/>
</dbReference>
<dbReference type="Gene3D" id="2.130.10.10">
    <property type="entry name" value="YVTN repeat-like/Quinoprotein amine dehydrogenase"/>
    <property type="match status" value="1"/>
</dbReference>
<dbReference type="InterPro" id="IPR020472">
    <property type="entry name" value="G-protein_beta_WD-40_rep"/>
</dbReference>
<dbReference type="InterPro" id="IPR044536">
    <property type="entry name" value="PEX7"/>
</dbReference>
<dbReference type="InterPro" id="IPR015943">
    <property type="entry name" value="WD40/YVTN_repeat-like_dom_sf"/>
</dbReference>
<dbReference type="InterPro" id="IPR019775">
    <property type="entry name" value="WD40_repeat_CS"/>
</dbReference>
<dbReference type="InterPro" id="IPR036322">
    <property type="entry name" value="WD40_repeat_dom_sf"/>
</dbReference>
<dbReference type="InterPro" id="IPR001680">
    <property type="entry name" value="WD40_rpt"/>
</dbReference>
<dbReference type="PANTHER" id="PTHR46027">
    <property type="entry name" value="PEROXISOMAL TARGETING SIGNAL 2 RECEPTOR"/>
    <property type="match status" value="1"/>
</dbReference>
<dbReference type="PANTHER" id="PTHR46027:SF1">
    <property type="entry name" value="PEROXISOMAL TARGETING SIGNAL 2 RECEPTOR"/>
    <property type="match status" value="1"/>
</dbReference>
<dbReference type="Pfam" id="PF00400">
    <property type="entry name" value="WD40"/>
    <property type="match status" value="6"/>
</dbReference>
<dbReference type="PRINTS" id="PR00320">
    <property type="entry name" value="GPROTEINBRPT"/>
</dbReference>
<dbReference type="SMART" id="SM00320">
    <property type="entry name" value="WD40"/>
    <property type="match status" value="6"/>
</dbReference>
<dbReference type="SUPFAM" id="SSF50978">
    <property type="entry name" value="WD40 repeat-like"/>
    <property type="match status" value="1"/>
</dbReference>
<dbReference type="PROSITE" id="PS00678">
    <property type="entry name" value="WD_REPEATS_1"/>
    <property type="match status" value="3"/>
</dbReference>
<dbReference type="PROSITE" id="PS50082">
    <property type="entry name" value="WD_REPEATS_2"/>
    <property type="match status" value="5"/>
</dbReference>
<dbReference type="PROSITE" id="PS50294">
    <property type="entry name" value="WD_REPEATS_REGION"/>
    <property type="match status" value="1"/>
</dbReference>